<keyword id="KW-1185">Reference proteome</keyword>
<keyword id="KW-0687">Ribonucleoprotein</keyword>
<keyword id="KW-0689">Ribosomal protein</keyword>
<keyword id="KW-0694">RNA-binding</keyword>
<keyword id="KW-0699">rRNA-binding</keyword>
<feature type="chain" id="PRO_1000166790" description="Large ribosomal subunit protein uL6">
    <location>
        <begin position="1"/>
        <end position="179"/>
    </location>
</feature>
<protein>
    <recommendedName>
        <fullName evidence="1">Large ribosomal subunit protein uL6</fullName>
    </recommendedName>
    <alternativeName>
        <fullName evidence="2">50S ribosomal protein L6</fullName>
    </alternativeName>
</protein>
<reference key="1">
    <citation type="journal article" date="2009" name="J. Bacteriol.">
        <title>Genome sequence of the probiotic bacterium Bifidobacterium animalis subsp. lactis AD011.</title>
        <authorList>
            <person name="Kim J.F."/>
            <person name="Jeong H."/>
            <person name="Yu D.S."/>
            <person name="Choi S.-H."/>
            <person name="Hur C.-G."/>
            <person name="Park M.-S."/>
            <person name="Yoon S.H."/>
            <person name="Kim D.-W."/>
            <person name="Ji G.E."/>
            <person name="Park H.-S."/>
            <person name="Oh T.K."/>
        </authorList>
    </citation>
    <scope>NUCLEOTIDE SEQUENCE [LARGE SCALE GENOMIC DNA]</scope>
    <source>
        <strain>AD011</strain>
    </source>
</reference>
<proteinExistence type="inferred from homology"/>
<organism>
    <name type="scientific">Bifidobacterium animalis subsp. lactis (strain AD011)</name>
    <dbReference type="NCBI Taxonomy" id="442563"/>
    <lineage>
        <taxon>Bacteria</taxon>
        <taxon>Bacillati</taxon>
        <taxon>Actinomycetota</taxon>
        <taxon>Actinomycetes</taxon>
        <taxon>Bifidobacteriales</taxon>
        <taxon>Bifidobacteriaceae</taxon>
        <taxon>Bifidobacterium</taxon>
    </lineage>
</organism>
<sequence>MASHIGKLPIEIPAGVEVTINGQEFAAKGAKGSDSYTIPEGVTAKVEGNEIIVTANDDLRPTRAKHGLARSIVASMVKGVHDGYSKSLDIVGTGYRAQMKGKGIEFSLGYSHTITVNPPEGITLELPNPNQVIVKGTDKQAVGQVAANIRKLRAPEPYKGKGIKYSDEVIRRKAGKAGK</sequence>
<accession>B8DW28</accession>
<evidence type="ECO:0000255" key="1">
    <source>
        <dbReference type="HAMAP-Rule" id="MF_01365"/>
    </source>
</evidence>
<evidence type="ECO:0000305" key="2"/>
<name>RL6_BIFA0</name>
<comment type="function">
    <text evidence="1">This protein binds to the 23S rRNA, and is important in its secondary structure. It is located near the subunit interface in the base of the L7/L12 stalk, and near the tRNA binding site of the peptidyltransferase center.</text>
</comment>
<comment type="subunit">
    <text evidence="1">Part of the 50S ribosomal subunit.</text>
</comment>
<comment type="similarity">
    <text evidence="1">Belongs to the universal ribosomal protein uL6 family.</text>
</comment>
<gene>
    <name evidence="1" type="primary">rplF</name>
    <name type="ordered locus">BLA_0377</name>
</gene>
<dbReference type="EMBL" id="CP001213">
    <property type="protein sequence ID" value="ACL28679.1"/>
    <property type="molecule type" value="Genomic_DNA"/>
</dbReference>
<dbReference type="RefSeq" id="WP_004268595.1">
    <property type="nucleotide sequence ID" value="NC_011835.1"/>
</dbReference>
<dbReference type="SMR" id="B8DW28"/>
<dbReference type="STRING" id="442563.BLA_0377"/>
<dbReference type="GeneID" id="29696640"/>
<dbReference type="KEGG" id="bla:BLA_0377"/>
<dbReference type="HOGENOM" id="CLU_065464_1_2_11"/>
<dbReference type="Proteomes" id="UP000002456">
    <property type="component" value="Chromosome"/>
</dbReference>
<dbReference type="GO" id="GO:0022625">
    <property type="term" value="C:cytosolic large ribosomal subunit"/>
    <property type="evidence" value="ECO:0007669"/>
    <property type="project" value="TreeGrafter"/>
</dbReference>
<dbReference type="GO" id="GO:0019843">
    <property type="term" value="F:rRNA binding"/>
    <property type="evidence" value="ECO:0007669"/>
    <property type="project" value="UniProtKB-UniRule"/>
</dbReference>
<dbReference type="GO" id="GO:0003735">
    <property type="term" value="F:structural constituent of ribosome"/>
    <property type="evidence" value="ECO:0007669"/>
    <property type="project" value="InterPro"/>
</dbReference>
<dbReference type="GO" id="GO:0002181">
    <property type="term" value="P:cytoplasmic translation"/>
    <property type="evidence" value="ECO:0007669"/>
    <property type="project" value="TreeGrafter"/>
</dbReference>
<dbReference type="FunFam" id="3.90.930.12:FF:000001">
    <property type="entry name" value="50S ribosomal protein L6"/>
    <property type="match status" value="1"/>
</dbReference>
<dbReference type="Gene3D" id="3.90.930.12">
    <property type="entry name" value="Ribosomal protein L6, alpha-beta domain"/>
    <property type="match status" value="2"/>
</dbReference>
<dbReference type="HAMAP" id="MF_01365_B">
    <property type="entry name" value="Ribosomal_uL6_B"/>
    <property type="match status" value="1"/>
</dbReference>
<dbReference type="InterPro" id="IPR000702">
    <property type="entry name" value="Ribosomal_uL6-like"/>
</dbReference>
<dbReference type="InterPro" id="IPR036789">
    <property type="entry name" value="Ribosomal_uL6-like_a/b-dom_sf"/>
</dbReference>
<dbReference type="InterPro" id="IPR020040">
    <property type="entry name" value="Ribosomal_uL6_a/b-dom"/>
</dbReference>
<dbReference type="InterPro" id="IPR019906">
    <property type="entry name" value="Ribosomal_uL6_bac-type"/>
</dbReference>
<dbReference type="InterPro" id="IPR002358">
    <property type="entry name" value="Ribosomal_uL6_CS"/>
</dbReference>
<dbReference type="NCBIfam" id="TIGR03654">
    <property type="entry name" value="L6_bact"/>
    <property type="match status" value="1"/>
</dbReference>
<dbReference type="PANTHER" id="PTHR11655">
    <property type="entry name" value="60S/50S RIBOSOMAL PROTEIN L6/L9"/>
    <property type="match status" value="1"/>
</dbReference>
<dbReference type="PANTHER" id="PTHR11655:SF14">
    <property type="entry name" value="LARGE RIBOSOMAL SUBUNIT PROTEIN UL6M"/>
    <property type="match status" value="1"/>
</dbReference>
<dbReference type="Pfam" id="PF00347">
    <property type="entry name" value="Ribosomal_L6"/>
    <property type="match status" value="2"/>
</dbReference>
<dbReference type="PIRSF" id="PIRSF002162">
    <property type="entry name" value="Ribosomal_L6"/>
    <property type="match status" value="1"/>
</dbReference>
<dbReference type="PRINTS" id="PR00059">
    <property type="entry name" value="RIBOSOMALL6"/>
</dbReference>
<dbReference type="SUPFAM" id="SSF56053">
    <property type="entry name" value="Ribosomal protein L6"/>
    <property type="match status" value="2"/>
</dbReference>
<dbReference type="PROSITE" id="PS00525">
    <property type="entry name" value="RIBOSOMAL_L6_1"/>
    <property type="match status" value="1"/>
</dbReference>